<dbReference type="EC" id="3.6.5.3" evidence="2"/>
<dbReference type="EMBL" id="CP000448">
    <property type="protein sequence ID" value="ABI69626.1"/>
    <property type="molecule type" value="Genomic_DNA"/>
</dbReference>
<dbReference type="RefSeq" id="WP_011641710.1">
    <property type="nucleotide sequence ID" value="NC_008346.1"/>
</dbReference>
<dbReference type="SMR" id="Q0AUH8"/>
<dbReference type="STRING" id="335541.Swol_2335"/>
<dbReference type="KEGG" id="swo:Swol_2335"/>
<dbReference type="eggNOG" id="COG0050">
    <property type="taxonomic scope" value="Bacteria"/>
</dbReference>
<dbReference type="HOGENOM" id="CLU_007265_0_1_9"/>
<dbReference type="OrthoDB" id="9804504at2"/>
<dbReference type="Proteomes" id="UP000001968">
    <property type="component" value="Chromosome"/>
</dbReference>
<dbReference type="GO" id="GO:0005829">
    <property type="term" value="C:cytosol"/>
    <property type="evidence" value="ECO:0007669"/>
    <property type="project" value="TreeGrafter"/>
</dbReference>
<dbReference type="GO" id="GO:0005525">
    <property type="term" value="F:GTP binding"/>
    <property type="evidence" value="ECO:0007669"/>
    <property type="project" value="UniProtKB-UniRule"/>
</dbReference>
<dbReference type="GO" id="GO:0003924">
    <property type="term" value="F:GTPase activity"/>
    <property type="evidence" value="ECO:0007669"/>
    <property type="project" value="InterPro"/>
</dbReference>
<dbReference type="GO" id="GO:0003746">
    <property type="term" value="F:translation elongation factor activity"/>
    <property type="evidence" value="ECO:0007669"/>
    <property type="project" value="UniProtKB-UniRule"/>
</dbReference>
<dbReference type="CDD" id="cd01884">
    <property type="entry name" value="EF_Tu"/>
    <property type="match status" value="1"/>
</dbReference>
<dbReference type="CDD" id="cd03697">
    <property type="entry name" value="EFTU_II"/>
    <property type="match status" value="1"/>
</dbReference>
<dbReference type="CDD" id="cd03707">
    <property type="entry name" value="EFTU_III"/>
    <property type="match status" value="1"/>
</dbReference>
<dbReference type="FunFam" id="2.40.30.10:FF:000001">
    <property type="entry name" value="Elongation factor Tu"/>
    <property type="match status" value="1"/>
</dbReference>
<dbReference type="FunFam" id="3.40.50.300:FF:000003">
    <property type="entry name" value="Elongation factor Tu"/>
    <property type="match status" value="1"/>
</dbReference>
<dbReference type="Gene3D" id="3.40.50.300">
    <property type="entry name" value="P-loop containing nucleotide triphosphate hydrolases"/>
    <property type="match status" value="1"/>
</dbReference>
<dbReference type="Gene3D" id="2.40.30.10">
    <property type="entry name" value="Translation factors"/>
    <property type="match status" value="2"/>
</dbReference>
<dbReference type="HAMAP" id="MF_00118_B">
    <property type="entry name" value="EF_Tu_B"/>
    <property type="match status" value="1"/>
</dbReference>
<dbReference type="InterPro" id="IPR041709">
    <property type="entry name" value="EF-Tu_GTP-bd"/>
</dbReference>
<dbReference type="InterPro" id="IPR050055">
    <property type="entry name" value="EF-Tu_GTPase"/>
</dbReference>
<dbReference type="InterPro" id="IPR004161">
    <property type="entry name" value="EFTu-like_2"/>
</dbReference>
<dbReference type="InterPro" id="IPR033720">
    <property type="entry name" value="EFTU_2"/>
</dbReference>
<dbReference type="InterPro" id="IPR031157">
    <property type="entry name" value="G_TR_CS"/>
</dbReference>
<dbReference type="InterPro" id="IPR027417">
    <property type="entry name" value="P-loop_NTPase"/>
</dbReference>
<dbReference type="InterPro" id="IPR005225">
    <property type="entry name" value="Small_GTP-bd"/>
</dbReference>
<dbReference type="InterPro" id="IPR000795">
    <property type="entry name" value="T_Tr_GTP-bd_dom"/>
</dbReference>
<dbReference type="InterPro" id="IPR009000">
    <property type="entry name" value="Transl_B-barrel_sf"/>
</dbReference>
<dbReference type="InterPro" id="IPR009001">
    <property type="entry name" value="Transl_elong_EF1A/Init_IF2_C"/>
</dbReference>
<dbReference type="InterPro" id="IPR004541">
    <property type="entry name" value="Transl_elong_EFTu/EF1A_bac/org"/>
</dbReference>
<dbReference type="InterPro" id="IPR004160">
    <property type="entry name" value="Transl_elong_EFTu/EF1A_C"/>
</dbReference>
<dbReference type="NCBIfam" id="TIGR00485">
    <property type="entry name" value="EF-Tu"/>
    <property type="match status" value="1"/>
</dbReference>
<dbReference type="NCBIfam" id="NF000766">
    <property type="entry name" value="PRK00049.1"/>
    <property type="match status" value="1"/>
</dbReference>
<dbReference type="NCBIfam" id="NF009372">
    <property type="entry name" value="PRK12735.1"/>
    <property type="match status" value="1"/>
</dbReference>
<dbReference type="NCBIfam" id="NF009373">
    <property type="entry name" value="PRK12736.1"/>
    <property type="match status" value="1"/>
</dbReference>
<dbReference type="NCBIfam" id="TIGR00231">
    <property type="entry name" value="small_GTP"/>
    <property type="match status" value="1"/>
</dbReference>
<dbReference type="PANTHER" id="PTHR43721:SF22">
    <property type="entry name" value="ELONGATION FACTOR TU, MITOCHONDRIAL"/>
    <property type="match status" value="1"/>
</dbReference>
<dbReference type="PANTHER" id="PTHR43721">
    <property type="entry name" value="ELONGATION FACTOR TU-RELATED"/>
    <property type="match status" value="1"/>
</dbReference>
<dbReference type="Pfam" id="PF00009">
    <property type="entry name" value="GTP_EFTU"/>
    <property type="match status" value="1"/>
</dbReference>
<dbReference type="Pfam" id="PF03144">
    <property type="entry name" value="GTP_EFTU_D2"/>
    <property type="match status" value="1"/>
</dbReference>
<dbReference type="Pfam" id="PF03143">
    <property type="entry name" value="GTP_EFTU_D3"/>
    <property type="match status" value="1"/>
</dbReference>
<dbReference type="PRINTS" id="PR00315">
    <property type="entry name" value="ELONGATNFCT"/>
</dbReference>
<dbReference type="SUPFAM" id="SSF50465">
    <property type="entry name" value="EF-Tu/eEF-1alpha/eIF2-gamma C-terminal domain"/>
    <property type="match status" value="1"/>
</dbReference>
<dbReference type="SUPFAM" id="SSF52540">
    <property type="entry name" value="P-loop containing nucleoside triphosphate hydrolases"/>
    <property type="match status" value="1"/>
</dbReference>
<dbReference type="SUPFAM" id="SSF50447">
    <property type="entry name" value="Translation proteins"/>
    <property type="match status" value="1"/>
</dbReference>
<dbReference type="PROSITE" id="PS00301">
    <property type="entry name" value="G_TR_1"/>
    <property type="match status" value="1"/>
</dbReference>
<dbReference type="PROSITE" id="PS51722">
    <property type="entry name" value="G_TR_2"/>
    <property type="match status" value="1"/>
</dbReference>
<organism>
    <name type="scientific">Syntrophomonas wolfei subsp. wolfei (strain DSM 2245B / Goettingen)</name>
    <dbReference type="NCBI Taxonomy" id="335541"/>
    <lineage>
        <taxon>Bacteria</taxon>
        <taxon>Bacillati</taxon>
        <taxon>Bacillota</taxon>
        <taxon>Clostridia</taxon>
        <taxon>Eubacteriales</taxon>
        <taxon>Syntrophomonadaceae</taxon>
        <taxon>Syntrophomonas</taxon>
    </lineage>
</organism>
<comment type="function">
    <text evidence="2">GTP hydrolase that promotes the GTP-dependent binding of aminoacyl-tRNA to the A-site of ribosomes during protein biosynthesis.</text>
</comment>
<comment type="catalytic activity">
    <reaction evidence="2">
        <text>GTP + H2O = GDP + phosphate + H(+)</text>
        <dbReference type="Rhea" id="RHEA:19669"/>
        <dbReference type="ChEBI" id="CHEBI:15377"/>
        <dbReference type="ChEBI" id="CHEBI:15378"/>
        <dbReference type="ChEBI" id="CHEBI:37565"/>
        <dbReference type="ChEBI" id="CHEBI:43474"/>
        <dbReference type="ChEBI" id="CHEBI:58189"/>
        <dbReference type="EC" id="3.6.5.3"/>
    </reaction>
    <physiologicalReaction direction="left-to-right" evidence="2">
        <dbReference type="Rhea" id="RHEA:19670"/>
    </physiologicalReaction>
</comment>
<comment type="subunit">
    <text evidence="2">Monomer.</text>
</comment>
<comment type="subcellular location">
    <subcellularLocation>
        <location evidence="2">Cytoplasm</location>
    </subcellularLocation>
</comment>
<comment type="similarity">
    <text evidence="2">Belongs to the TRAFAC class translation factor GTPase superfamily. Classic translation factor GTPase family. EF-Tu/EF-1A subfamily.</text>
</comment>
<name>EFTU1_SYNWW</name>
<reference key="1">
    <citation type="journal article" date="2010" name="Environ. Microbiol.">
        <title>The genome of Syntrophomonas wolfei: new insights into syntrophic metabolism and biohydrogen production.</title>
        <authorList>
            <person name="Sieber J.R."/>
            <person name="Sims D.R."/>
            <person name="Han C."/>
            <person name="Kim E."/>
            <person name="Lykidis A."/>
            <person name="Lapidus A.L."/>
            <person name="McDonnald E."/>
            <person name="Rohlin L."/>
            <person name="Culley D.E."/>
            <person name="Gunsalus R."/>
            <person name="McInerney M.J."/>
        </authorList>
    </citation>
    <scope>NUCLEOTIDE SEQUENCE [LARGE SCALE GENOMIC DNA]</scope>
    <source>
        <strain>DSM 2245B / Goettingen</strain>
    </source>
</reference>
<protein>
    <recommendedName>
        <fullName evidence="2">Elongation factor Tu 1</fullName>
        <shortName evidence="2">EF-Tu 1</shortName>
        <ecNumber evidence="2">3.6.5.3</ecNumber>
    </recommendedName>
</protein>
<accession>Q0AUH8</accession>
<keyword id="KW-0963">Cytoplasm</keyword>
<keyword id="KW-0251">Elongation factor</keyword>
<keyword id="KW-0342">GTP-binding</keyword>
<keyword id="KW-0378">Hydrolase</keyword>
<keyword id="KW-0460">Magnesium</keyword>
<keyword id="KW-0479">Metal-binding</keyword>
<keyword id="KW-0547">Nucleotide-binding</keyword>
<keyword id="KW-0648">Protein biosynthesis</keyword>
<keyword id="KW-1185">Reference proteome</keyword>
<proteinExistence type="inferred from homology"/>
<sequence length="400" mass="44180">MAKAKYERTKPHLNIGTIGHIDHGKTTLTAAITKTLSQVGGAKATSYEEIDKAPEERERGITINTSHVEYQTETRHYAHVDCPGHADYIKNMITGAAQMDGSILVVSAADGPMPQTREHILLSRQVGVPYIVVFMNKTDMVDDPELLELVEMEVRELLSFYEFPGDDIPVLMGSALKALECGCGTRECEWCKHIWELMDAVDSYIPLPQRAVDKPFLMPIEDVFTITGRGTVTTGRVERGQVKVGDEVEIVGMREATRKTVCTGVEMFRKLLDYAEAGDNIGTLLRGVDRKEVERGMVLAKPGSIKPLTAFNAEVYVLTKEEGGRHTPFFGGYRPQFYFRTTDVTGIIQLPEGVEMVMPGDNVQMAIELITPIAIEEGLRFAIREGGRTVGAGVVTSLNE</sequence>
<gene>
    <name evidence="2" type="primary">tuf1</name>
    <name type="ordered locus">Swol_2335</name>
</gene>
<feature type="chain" id="PRO_0000337560" description="Elongation factor Tu 1">
    <location>
        <begin position="1"/>
        <end position="400"/>
    </location>
</feature>
<feature type="domain" description="tr-type G">
    <location>
        <begin position="10"/>
        <end position="209"/>
    </location>
</feature>
<feature type="region of interest" description="G1" evidence="1">
    <location>
        <begin position="19"/>
        <end position="26"/>
    </location>
</feature>
<feature type="region of interest" description="G2" evidence="1">
    <location>
        <begin position="60"/>
        <end position="64"/>
    </location>
</feature>
<feature type="region of interest" description="G3" evidence="1">
    <location>
        <begin position="81"/>
        <end position="84"/>
    </location>
</feature>
<feature type="region of interest" description="G4" evidence="1">
    <location>
        <begin position="136"/>
        <end position="139"/>
    </location>
</feature>
<feature type="region of interest" description="G5" evidence="1">
    <location>
        <begin position="174"/>
        <end position="176"/>
    </location>
</feature>
<feature type="binding site" evidence="2">
    <location>
        <begin position="19"/>
        <end position="26"/>
    </location>
    <ligand>
        <name>GTP</name>
        <dbReference type="ChEBI" id="CHEBI:37565"/>
    </ligand>
</feature>
<feature type="binding site" evidence="2">
    <location>
        <position position="26"/>
    </location>
    <ligand>
        <name>Mg(2+)</name>
        <dbReference type="ChEBI" id="CHEBI:18420"/>
    </ligand>
</feature>
<feature type="binding site" evidence="2">
    <location>
        <begin position="81"/>
        <end position="85"/>
    </location>
    <ligand>
        <name>GTP</name>
        <dbReference type="ChEBI" id="CHEBI:37565"/>
    </ligand>
</feature>
<feature type="binding site" evidence="2">
    <location>
        <begin position="136"/>
        <end position="139"/>
    </location>
    <ligand>
        <name>GTP</name>
        <dbReference type="ChEBI" id="CHEBI:37565"/>
    </ligand>
</feature>
<evidence type="ECO:0000250" key="1"/>
<evidence type="ECO:0000255" key="2">
    <source>
        <dbReference type="HAMAP-Rule" id="MF_00118"/>
    </source>
</evidence>